<keyword id="KW-0903">Direct protein sequencing</keyword>
<keyword id="KW-0479">Metal-binding</keyword>
<keyword id="KW-0687">Ribonucleoprotein</keyword>
<keyword id="KW-0689">Ribosomal protein</keyword>
<keyword id="KW-0694">RNA-binding</keyword>
<keyword id="KW-0699">rRNA-binding</keyword>
<keyword id="KW-0862">Zinc</keyword>
<evidence type="ECO:0000250" key="1"/>
<evidence type="ECO:0000255" key="2"/>
<evidence type="ECO:0000305" key="3"/>
<gene>
    <name type="primary">rpmE</name>
</gene>
<proteinExistence type="evidence at protein level"/>
<name>RL31_ECTME</name>
<organism>
    <name type="scientific">Ectopseudomonas mendocina</name>
    <name type="common">Pseudomonas mendocina</name>
    <dbReference type="NCBI Taxonomy" id="300"/>
    <lineage>
        <taxon>Bacteria</taxon>
        <taxon>Pseudomonadati</taxon>
        <taxon>Pseudomonadota</taxon>
        <taxon>Gammaproteobacteria</taxon>
        <taxon>Pseudomonadales</taxon>
        <taxon>Pseudomonadaceae</taxon>
        <taxon>Ectopseudomonas</taxon>
    </lineage>
</organism>
<comment type="function">
    <text evidence="1">Binds the 23S rRNA.</text>
</comment>
<comment type="cofactor">
    <cofactor evidence="3">
        <name>Zn(2+)</name>
        <dbReference type="ChEBI" id="CHEBI:29105"/>
    </cofactor>
    <text evidence="3">Binds 1 zinc ion per subunit.</text>
</comment>
<comment type="subunit">
    <text evidence="1">Part of the 50S ribosomal subunit.</text>
</comment>
<comment type="similarity">
    <text evidence="3">Belongs to the bacterial ribosomal protein bL31 family. Type A subfamily.</text>
</comment>
<protein>
    <recommendedName>
        <fullName evidence="3">Large ribosomal subunit protein bL31</fullName>
    </recommendedName>
    <alternativeName>
        <fullName>50S ribosomal protein L31</fullName>
    </alternativeName>
</protein>
<feature type="chain" id="PRO_0000224008" description="Large ribosomal subunit protein bL31">
    <location>
        <begin position="1"/>
        <end position="20" status="greater than"/>
    </location>
</feature>
<feature type="binding site" evidence="2">
    <location>
        <position position="16"/>
    </location>
    <ligand>
        <name>Zn(2+)</name>
        <dbReference type="ChEBI" id="CHEBI:29105"/>
    </ligand>
</feature>
<feature type="binding site" evidence="2">
    <location>
        <position position="18"/>
    </location>
    <ligand>
        <name>Zn(2+)</name>
        <dbReference type="ChEBI" id="CHEBI:29105"/>
    </ligand>
</feature>
<feature type="non-terminal residue">
    <location>
        <position position="20"/>
    </location>
</feature>
<accession>Q9R5V7</accession>
<sequence>MKADIHPNYVEIDATXSXGN</sequence>
<dbReference type="STRING" id="1001585.MDS_0575"/>
<dbReference type="GO" id="GO:1990904">
    <property type="term" value="C:ribonucleoprotein complex"/>
    <property type="evidence" value="ECO:0007669"/>
    <property type="project" value="UniProtKB-KW"/>
</dbReference>
<dbReference type="GO" id="GO:0005840">
    <property type="term" value="C:ribosome"/>
    <property type="evidence" value="ECO:0007669"/>
    <property type="project" value="UniProtKB-KW"/>
</dbReference>
<dbReference type="GO" id="GO:0046872">
    <property type="term" value="F:metal ion binding"/>
    <property type="evidence" value="ECO:0007669"/>
    <property type="project" value="UniProtKB-KW"/>
</dbReference>
<dbReference type="GO" id="GO:0019843">
    <property type="term" value="F:rRNA binding"/>
    <property type="evidence" value="ECO:0007669"/>
    <property type="project" value="UniProtKB-KW"/>
</dbReference>
<reference key="1">
    <citation type="journal article" date="1995" name="Int. J. Syst. Bacteriol.">
        <title>Comparative ribosomal protein sequence analyses of a phylogenetically defined genus, Pseudomonas, and its relatives.</title>
        <authorList>
            <person name="Ochi K."/>
        </authorList>
    </citation>
    <scope>PROTEIN SEQUENCE</scope>
    <source>
        <strain>ATCC 25411 / DSM 50017 / CCUG 1781 / CIP 75.21 / JCM 5966 / NBRC 14162 / NCTC 10897 / NCIMB 10541 / VKM B-972</strain>
    </source>
</reference>